<protein>
    <recommendedName>
        <fullName evidence="1">Aspartate 1-decarboxylase</fullName>
        <ecNumber evidence="1">4.1.1.11</ecNumber>
    </recommendedName>
    <alternativeName>
        <fullName evidence="1">Aspartate alpha-decarboxylase</fullName>
    </alternativeName>
    <component>
        <recommendedName>
            <fullName evidence="1">Aspartate 1-decarboxylase beta chain</fullName>
        </recommendedName>
    </component>
    <component>
        <recommendedName>
            <fullName evidence="1">Aspartate 1-decarboxylase alpha chain</fullName>
        </recommendedName>
    </component>
</protein>
<sequence length="127" mass="14050">MFRTLMNAKIHRARVTEANLNYVGSITIDADILDAVGMVPNEKVQIVNNNNGARFETYIIPGERGSGVFCLNGAAARLVQKGDIIIVISYAIVPEEKIAQHRPKIAIMDENNRIQQLIVEEPAHTVL</sequence>
<evidence type="ECO:0000255" key="1">
    <source>
        <dbReference type="HAMAP-Rule" id="MF_00446"/>
    </source>
</evidence>
<keyword id="KW-0068">Autocatalytic cleavage</keyword>
<keyword id="KW-0963">Cytoplasm</keyword>
<keyword id="KW-0210">Decarboxylase</keyword>
<keyword id="KW-0456">Lyase</keyword>
<keyword id="KW-0566">Pantothenate biosynthesis</keyword>
<keyword id="KW-0670">Pyruvate</keyword>
<keyword id="KW-0704">Schiff base</keyword>
<keyword id="KW-0865">Zymogen</keyword>
<proteinExistence type="inferred from homology"/>
<name>PAND_GEOSW</name>
<organism>
    <name type="scientific">Geobacillus sp. (strain WCH70)</name>
    <dbReference type="NCBI Taxonomy" id="471223"/>
    <lineage>
        <taxon>Bacteria</taxon>
        <taxon>Bacillati</taxon>
        <taxon>Bacillota</taxon>
        <taxon>Bacilli</taxon>
        <taxon>Bacillales</taxon>
        <taxon>Anoxybacillaceae</taxon>
        <taxon>Geobacillus</taxon>
    </lineage>
</organism>
<reference key="1">
    <citation type="submission" date="2009-06" db="EMBL/GenBank/DDBJ databases">
        <title>Complete sequence of chromosome of Geopacillus sp. WCH70.</title>
        <authorList>
            <consortium name="US DOE Joint Genome Institute"/>
            <person name="Lucas S."/>
            <person name="Copeland A."/>
            <person name="Lapidus A."/>
            <person name="Glavina del Rio T."/>
            <person name="Dalin E."/>
            <person name="Tice H."/>
            <person name="Bruce D."/>
            <person name="Goodwin L."/>
            <person name="Pitluck S."/>
            <person name="Chertkov O."/>
            <person name="Brettin T."/>
            <person name="Detter J.C."/>
            <person name="Han C."/>
            <person name="Larimer F."/>
            <person name="Land M."/>
            <person name="Hauser L."/>
            <person name="Kyrpides N."/>
            <person name="Mikhailova N."/>
            <person name="Brumm P."/>
            <person name="Mead D.A."/>
            <person name="Richardson P."/>
        </authorList>
    </citation>
    <scope>NUCLEOTIDE SEQUENCE [LARGE SCALE GENOMIC DNA]</scope>
    <source>
        <strain>WCH70</strain>
    </source>
</reference>
<comment type="function">
    <text evidence="1">Catalyzes the pyruvoyl-dependent decarboxylation of aspartate to produce beta-alanine.</text>
</comment>
<comment type="catalytic activity">
    <reaction evidence="1">
        <text>L-aspartate + H(+) = beta-alanine + CO2</text>
        <dbReference type="Rhea" id="RHEA:19497"/>
        <dbReference type="ChEBI" id="CHEBI:15378"/>
        <dbReference type="ChEBI" id="CHEBI:16526"/>
        <dbReference type="ChEBI" id="CHEBI:29991"/>
        <dbReference type="ChEBI" id="CHEBI:57966"/>
        <dbReference type="EC" id="4.1.1.11"/>
    </reaction>
</comment>
<comment type="cofactor">
    <cofactor evidence="1">
        <name>pyruvate</name>
        <dbReference type="ChEBI" id="CHEBI:15361"/>
    </cofactor>
    <text evidence="1">Binds 1 pyruvoyl group covalently per subunit.</text>
</comment>
<comment type="pathway">
    <text evidence="1">Cofactor biosynthesis; (R)-pantothenate biosynthesis; beta-alanine from L-aspartate: step 1/1.</text>
</comment>
<comment type="subunit">
    <text evidence="1">Heterooctamer of four alpha and four beta subunits.</text>
</comment>
<comment type="subcellular location">
    <subcellularLocation>
        <location evidence="1">Cytoplasm</location>
    </subcellularLocation>
</comment>
<comment type="PTM">
    <text evidence="1">Is synthesized initially as an inactive proenzyme, which is activated by self-cleavage at a specific serine bond to produce a beta-subunit with a hydroxyl group at its C-terminus and an alpha-subunit with a pyruvoyl group at its N-terminus.</text>
</comment>
<comment type="similarity">
    <text evidence="1">Belongs to the PanD family.</text>
</comment>
<dbReference type="EC" id="4.1.1.11" evidence="1"/>
<dbReference type="EMBL" id="CP001638">
    <property type="protein sequence ID" value="ACS24826.1"/>
    <property type="molecule type" value="Genomic_DNA"/>
</dbReference>
<dbReference type="SMR" id="C5D3B1"/>
<dbReference type="STRING" id="471223.GWCH70_2116"/>
<dbReference type="KEGG" id="gwc:GWCH70_2116"/>
<dbReference type="eggNOG" id="COG0853">
    <property type="taxonomic scope" value="Bacteria"/>
</dbReference>
<dbReference type="HOGENOM" id="CLU_115305_2_0_9"/>
<dbReference type="OrthoDB" id="9803983at2"/>
<dbReference type="UniPathway" id="UPA00028">
    <property type="reaction ID" value="UER00002"/>
</dbReference>
<dbReference type="GO" id="GO:0005829">
    <property type="term" value="C:cytosol"/>
    <property type="evidence" value="ECO:0007669"/>
    <property type="project" value="TreeGrafter"/>
</dbReference>
<dbReference type="GO" id="GO:0004068">
    <property type="term" value="F:aspartate 1-decarboxylase activity"/>
    <property type="evidence" value="ECO:0007669"/>
    <property type="project" value="UniProtKB-UniRule"/>
</dbReference>
<dbReference type="GO" id="GO:0006523">
    <property type="term" value="P:alanine biosynthetic process"/>
    <property type="evidence" value="ECO:0007669"/>
    <property type="project" value="InterPro"/>
</dbReference>
<dbReference type="GO" id="GO:0015940">
    <property type="term" value="P:pantothenate biosynthetic process"/>
    <property type="evidence" value="ECO:0007669"/>
    <property type="project" value="UniProtKB-UniRule"/>
</dbReference>
<dbReference type="CDD" id="cd06919">
    <property type="entry name" value="Asp_decarbox"/>
    <property type="match status" value="1"/>
</dbReference>
<dbReference type="Gene3D" id="2.40.40.20">
    <property type="match status" value="1"/>
</dbReference>
<dbReference type="HAMAP" id="MF_00446">
    <property type="entry name" value="PanD"/>
    <property type="match status" value="1"/>
</dbReference>
<dbReference type="InterPro" id="IPR009010">
    <property type="entry name" value="Asp_de-COase-like_dom_sf"/>
</dbReference>
<dbReference type="InterPro" id="IPR003190">
    <property type="entry name" value="Asp_decarbox"/>
</dbReference>
<dbReference type="NCBIfam" id="TIGR00223">
    <property type="entry name" value="panD"/>
    <property type="match status" value="1"/>
</dbReference>
<dbReference type="PANTHER" id="PTHR21012">
    <property type="entry name" value="ASPARTATE 1-DECARBOXYLASE"/>
    <property type="match status" value="1"/>
</dbReference>
<dbReference type="PANTHER" id="PTHR21012:SF0">
    <property type="entry name" value="ASPARTATE 1-DECARBOXYLASE"/>
    <property type="match status" value="1"/>
</dbReference>
<dbReference type="Pfam" id="PF02261">
    <property type="entry name" value="Asp_decarbox"/>
    <property type="match status" value="1"/>
</dbReference>
<dbReference type="PIRSF" id="PIRSF006246">
    <property type="entry name" value="Asp_decarbox"/>
    <property type="match status" value="1"/>
</dbReference>
<dbReference type="SUPFAM" id="SSF50692">
    <property type="entry name" value="ADC-like"/>
    <property type="match status" value="1"/>
</dbReference>
<accession>C5D3B1</accession>
<gene>
    <name evidence="1" type="primary">panD</name>
    <name type="ordered locus">GWCH70_2116</name>
</gene>
<feature type="chain" id="PRO_1000206182" description="Aspartate 1-decarboxylase beta chain" evidence="1">
    <location>
        <begin position="1"/>
        <end position="24"/>
    </location>
</feature>
<feature type="chain" id="PRO_1000206183" description="Aspartate 1-decarboxylase alpha chain" evidence="1">
    <location>
        <begin position="25"/>
        <end position="127"/>
    </location>
</feature>
<feature type="active site" description="Schiff-base intermediate with substrate; via pyruvic acid" evidence="1">
    <location>
        <position position="25"/>
    </location>
</feature>
<feature type="active site" description="Proton donor" evidence="1">
    <location>
        <position position="58"/>
    </location>
</feature>
<feature type="binding site" evidence="1">
    <location>
        <position position="57"/>
    </location>
    <ligand>
        <name>substrate</name>
    </ligand>
</feature>
<feature type="binding site" evidence="1">
    <location>
        <begin position="73"/>
        <end position="75"/>
    </location>
    <ligand>
        <name>substrate</name>
    </ligand>
</feature>
<feature type="modified residue" description="Pyruvic acid (Ser)" evidence="1">
    <location>
        <position position="25"/>
    </location>
</feature>